<name>SYS_LYSSC</name>
<comment type="function">
    <text evidence="1">Catalyzes the attachment of serine to tRNA(Ser). Is also able to aminoacylate tRNA(Sec) with serine, to form the misacylated tRNA L-seryl-tRNA(Sec), which will be further converted into selenocysteinyl-tRNA(Sec).</text>
</comment>
<comment type="catalytic activity">
    <reaction evidence="1">
        <text>tRNA(Ser) + L-serine + ATP = L-seryl-tRNA(Ser) + AMP + diphosphate + H(+)</text>
        <dbReference type="Rhea" id="RHEA:12292"/>
        <dbReference type="Rhea" id="RHEA-COMP:9669"/>
        <dbReference type="Rhea" id="RHEA-COMP:9703"/>
        <dbReference type="ChEBI" id="CHEBI:15378"/>
        <dbReference type="ChEBI" id="CHEBI:30616"/>
        <dbReference type="ChEBI" id="CHEBI:33019"/>
        <dbReference type="ChEBI" id="CHEBI:33384"/>
        <dbReference type="ChEBI" id="CHEBI:78442"/>
        <dbReference type="ChEBI" id="CHEBI:78533"/>
        <dbReference type="ChEBI" id="CHEBI:456215"/>
        <dbReference type="EC" id="6.1.1.11"/>
    </reaction>
</comment>
<comment type="catalytic activity">
    <reaction evidence="1">
        <text>tRNA(Sec) + L-serine + ATP = L-seryl-tRNA(Sec) + AMP + diphosphate + H(+)</text>
        <dbReference type="Rhea" id="RHEA:42580"/>
        <dbReference type="Rhea" id="RHEA-COMP:9742"/>
        <dbReference type="Rhea" id="RHEA-COMP:10128"/>
        <dbReference type="ChEBI" id="CHEBI:15378"/>
        <dbReference type="ChEBI" id="CHEBI:30616"/>
        <dbReference type="ChEBI" id="CHEBI:33019"/>
        <dbReference type="ChEBI" id="CHEBI:33384"/>
        <dbReference type="ChEBI" id="CHEBI:78442"/>
        <dbReference type="ChEBI" id="CHEBI:78533"/>
        <dbReference type="ChEBI" id="CHEBI:456215"/>
        <dbReference type="EC" id="6.1.1.11"/>
    </reaction>
</comment>
<comment type="pathway">
    <text evidence="1">Aminoacyl-tRNA biosynthesis; selenocysteinyl-tRNA(Sec) biosynthesis; L-seryl-tRNA(Sec) from L-serine and tRNA(Sec): step 1/1.</text>
</comment>
<comment type="subunit">
    <text evidence="1">Homodimer. The tRNA molecule binds across the dimer.</text>
</comment>
<comment type="subcellular location">
    <subcellularLocation>
        <location evidence="1">Cytoplasm</location>
    </subcellularLocation>
</comment>
<comment type="domain">
    <text evidence="1">Consists of two distinct domains, a catalytic core and a N-terminal extension that is involved in tRNA binding.</text>
</comment>
<comment type="similarity">
    <text evidence="1">Belongs to the class-II aminoacyl-tRNA synthetase family. Type-1 seryl-tRNA synthetase subfamily.</text>
</comment>
<keyword id="KW-0030">Aminoacyl-tRNA synthetase</keyword>
<keyword id="KW-0067">ATP-binding</keyword>
<keyword id="KW-0963">Cytoplasm</keyword>
<keyword id="KW-0436">Ligase</keyword>
<keyword id="KW-0547">Nucleotide-binding</keyword>
<keyword id="KW-0648">Protein biosynthesis</keyword>
<protein>
    <recommendedName>
        <fullName evidence="1">Serine--tRNA ligase</fullName>
        <ecNumber evidence="1">6.1.1.11</ecNumber>
    </recommendedName>
    <alternativeName>
        <fullName evidence="1">Seryl-tRNA synthetase</fullName>
        <shortName evidence="1">SerRS</shortName>
    </alternativeName>
    <alternativeName>
        <fullName evidence="1">Seryl-tRNA(Ser/Sec) synthetase</fullName>
    </alternativeName>
</protein>
<organism>
    <name type="scientific">Lysinibacillus sphaericus (strain C3-41)</name>
    <dbReference type="NCBI Taxonomy" id="444177"/>
    <lineage>
        <taxon>Bacteria</taxon>
        <taxon>Bacillati</taxon>
        <taxon>Bacillota</taxon>
        <taxon>Bacilli</taxon>
        <taxon>Bacillales</taxon>
        <taxon>Bacillaceae</taxon>
        <taxon>Lysinibacillus</taxon>
    </lineage>
</organism>
<reference key="1">
    <citation type="journal article" date="2008" name="J. Bacteriol.">
        <title>Complete genome sequence of the mosquitocidal bacterium Bacillus sphaericus C3-41 and comparison with those of closely related Bacillus species.</title>
        <authorList>
            <person name="Hu X."/>
            <person name="Fan W."/>
            <person name="Han B."/>
            <person name="Liu H."/>
            <person name="Zheng D."/>
            <person name="Li Q."/>
            <person name="Dong W."/>
            <person name="Yan J."/>
            <person name="Gao M."/>
            <person name="Berry C."/>
            <person name="Yuan Z."/>
        </authorList>
    </citation>
    <scope>NUCLEOTIDE SEQUENCE [LARGE SCALE GENOMIC DNA]</scope>
    <source>
        <strain>C3-41</strain>
    </source>
</reference>
<proteinExistence type="inferred from homology"/>
<accession>B1HS47</accession>
<sequence>MLDIKRVRDNFAEIKEMLLTRNEDLGNLDDFENLDAKRRELIAKTEELKAERNKVSEQISVMKRNKENADEVIARMRQVGDEIKELDIQLNDVEDRFKDMMMRLPNVPHESVPVGTTEDDNVEEYTWGEIPAFDFEIKAHWDLATDLKIVDFERGAKVTGSRFLFYRGLGARLERALMTFMMDLHAEEHGYEEMLPPVIVNRESLTGTGQLPKFEEDVFKLAETDYFMIPTAEVPVTNFYRDEILTAEALPQGFAAYSACFRSEAGSAGRDTRGLIRQHQFNKVELVRFVKPEESYEQLELLTGHAEKVLQLLGLPYRKLKMCTADLGFTAAKKYDLEVWIPAQNMYREISSCSNFEDFQARRANIRFRREPNAKPEYVHTLNGSGLAIGRTVAAILENYQQADGSVVIPEVLRPYMGGKEVIAPK</sequence>
<gene>
    <name evidence="1" type="primary">serS</name>
    <name type="ordered locus">Bsph_0023</name>
</gene>
<dbReference type="EC" id="6.1.1.11" evidence="1"/>
<dbReference type="EMBL" id="CP000817">
    <property type="protein sequence ID" value="ACA37665.1"/>
    <property type="molecule type" value="Genomic_DNA"/>
</dbReference>
<dbReference type="RefSeq" id="WP_012291843.1">
    <property type="nucleotide sequence ID" value="NC_010382.1"/>
</dbReference>
<dbReference type="SMR" id="B1HS47"/>
<dbReference type="EnsemblBacteria" id="ACA37665">
    <property type="protein sequence ID" value="ACA37665"/>
    <property type="gene ID" value="Bsph_0023"/>
</dbReference>
<dbReference type="KEGG" id="lsp:Bsph_0023"/>
<dbReference type="HOGENOM" id="CLU_023797_1_1_9"/>
<dbReference type="UniPathway" id="UPA00906">
    <property type="reaction ID" value="UER00895"/>
</dbReference>
<dbReference type="Proteomes" id="UP000002164">
    <property type="component" value="Chromosome"/>
</dbReference>
<dbReference type="GO" id="GO:0005737">
    <property type="term" value="C:cytoplasm"/>
    <property type="evidence" value="ECO:0007669"/>
    <property type="project" value="UniProtKB-SubCell"/>
</dbReference>
<dbReference type="GO" id="GO:0005524">
    <property type="term" value="F:ATP binding"/>
    <property type="evidence" value="ECO:0007669"/>
    <property type="project" value="UniProtKB-UniRule"/>
</dbReference>
<dbReference type="GO" id="GO:0140096">
    <property type="term" value="F:catalytic activity, acting on a protein"/>
    <property type="evidence" value="ECO:0007669"/>
    <property type="project" value="UniProtKB-ARBA"/>
</dbReference>
<dbReference type="GO" id="GO:0004828">
    <property type="term" value="F:serine-tRNA ligase activity"/>
    <property type="evidence" value="ECO:0007669"/>
    <property type="project" value="UniProtKB-UniRule"/>
</dbReference>
<dbReference type="GO" id="GO:0016740">
    <property type="term" value="F:transferase activity"/>
    <property type="evidence" value="ECO:0007669"/>
    <property type="project" value="UniProtKB-ARBA"/>
</dbReference>
<dbReference type="GO" id="GO:0016260">
    <property type="term" value="P:selenocysteine biosynthetic process"/>
    <property type="evidence" value="ECO:0007669"/>
    <property type="project" value="UniProtKB-UniRule"/>
</dbReference>
<dbReference type="GO" id="GO:0006434">
    <property type="term" value="P:seryl-tRNA aminoacylation"/>
    <property type="evidence" value="ECO:0007669"/>
    <property type="project" value="UniProtKB-UniRule"/>
</dbReference>
<dbReference type="CDD" id="cd00770">
    <property type="entry name" value="SerRS_core"/>
    <property type="match status" value="1"/>
</dbReference>
<dbReference type="Gene3D" id="3.30.930.10">
    <property type="entry name" value="Bira Bifunctional Protein, Domain 2"/>
    <property type="match status" value="1"/>
</dbReference>
<dbReference type="Gene3D" id="1.10.287.40">
    <property type="entry name" value="Serine-tRNA synthetase, tRNA binding domain"/>
    <property type="match status" value="1"/>
</dbReference>
<dbReference type="HAMAP" id="MF_00176">
    <property type="entry name" value="Ser_tRNA_synth_type1"/>
    <property type="match status" value="1"/>
</dbReference>
<dbReference type="InterPro" id="IPR002314">
    <property type="entry name" value="aa-tRNA-synt_IIb"/>
</dbReference>
<dbReference type="InterPro" id="IPR006195">
    <property type="entry name" value="aa-tRNA-synth_II"/>
</dbReference>
<dbReference type="InterPro" id="IPR045864">
    <property type="entry name" value="aa-tRNA-synth_II/BPL/LPL"/>
</dbReference>
<dbReference type="InterPro" id="IPR002317">
    <property type="entry name" value="Ser-tRNA-ligase_type_1"/>
</dbReference>
<dbReference type="InterPro" id="IPR015866">
    <property type="entry name" value="Ser-tRNA-synth_1_N"/>
</dbReference>
<dbReference type="InterPro" id="IPR042103">
    <property type="entry name" value="SerRS_1_N_sf"/>
</dbReference>
<dbReference type="InterPro" id="IPR033729">
    <property type="entry name" value="SerRS_core"/>
</dbReference>
<dbReference type="InterPro" id="IPR010978">
    <property type="entry name" value="tRNA-bd_arm"/>
</dbReference>
<dbReference type="NCBIfam" id="TIGR00414">
    <property type="entry name" value="serS"/>
    <property type="match status" value="1"/>
</dbReference>
<dbReference type="PANTHER" id="PTHR43697:SF1">
    <property type="entry name" value="SERINE--TRNA LIGASE"/>
    <property type="match status" value="1"/>
</dbReference>
<dbReference type="PANTHER" id="PTHR43697">
    <property type="entry name" value="SERYL-TRNA SYNTHETASE"/>
    <property type="match status" value="1"/>
</dbReference>
<dbReference type="Pfam" id="PF02403">
    <property type="entry name" value="Seryl_tRNA_N"/>
    <property type="match status" value="1"/>
</dbReference>
<dbReference type="Pfam" id="PF00587">
    <property type="entry name" value="tRNA-synt_2b"/>
    <property type="match status" value="1"/>
</dbReference>
<dbReference type="PIRSF" id="PIRSF001529">
    <property type="entry name" value="Ser-tRNA-synth_IIa"/>
    <property type="match status" value="1"/>
</dbReference>
<dbReference type="PRINTS" id="PR00981">
    <property type="entry name" value="TRNASYNTHSER"/>
</dbReference>
<dbReference type="SUPFAM" id="SSF55681">
    <property type="entry name" value="Class II aaRS and biotin synthetases"/>
    <property type="match status" value="1"/>
</dbReference>
<dbReference type="SUPFAM" id="SSF46589">
    <property type="entry name" value="tRNA-binding arm"/>
    <property type="match status" value="1"/>
</dbReference>
<dbReference type="PROSITE" id="PS50862">
    <property type="entry name" value="AA_TRNA_LIGASE_II"/>
    <property type="match status" value="1"/>
</dbReference>
<feature type="chain" id="PRO_1000098090" description="Serine--tRNA ligase">
    <location>
        <begin position="1"/>
        <end position="426"/>
    </location>
</feature>
<feature type="binding site" evidence="1">
    <location>
        <begin position="231"/>
        <end position="233"/>
    </location>
    <ligand>
        <name>L-serine</name>
        <dbReference type="ChEBI" id="CHEBI:33384"/>
    </ligand>
</feature>
<feature type="binding site" evidence="1">
    <location>
        <begin position="262"/>
        <end position="264"/>
    </location>
    <ligand>
        <name>ATP</name>
        <dbReference type="ChEBI" id="CHEBI:30616"/>
    </ligand>
</feature>
<feature type="binding site" evidence="1">
    <location>
        <position position="285"/>
    </location>
    <ligand>
        <name>L-serine</name>
        <dbReference type="ChEBI" id="CHEBI:33384"/>
    </ligand>
</feature>
<feature type="binding site" evidence="1">
    <location>
        <begin position="349"/>
        <end position="352"/>
    </location>
    <ligand>
        <name>ATP</name>
        <dbReference type="ChEBI" id="CHEBI:30616"/>
    </ligand>
</feature>
<feature type="binding site" evidence="1">
    <location>
        <position position="385"/>
    </location>
    <ligand>
        <name>L-serine</name>
        <dbReference type="ChEBI" id="CHEBI:33384"/>
    </ligand>
</feature>
<evidence type="ECO:0000255" key="1">
    <source>
        <dbReference type="HAMAP-Rule" id="MF_00176"/>
    </source>
</evidence>